<sequence>MNDLNVLVLEDEPFQRLVAVTALKKVVPGSILEAADGKEAVAILESCGHVDIAICDLQMSGMDGLAFLRHASLSGKVHSVILSSEVDPILRQATISMIECLGLNFLGDLGKPFSLERITALLTRYNARRQDLPRQIEVAELPSVADVVRGLDNGEFEAYYQPKVALDGGGLIGAEVLARWNHPHLGVLPPSHFLYVMETYNLVDKLFWQLFSQGLATRRKLAQLGQPINLAFNVHPSQLGSRALAENISALLTEFHLPPSSVMFEITETGLISAPASSLENLVRLRIMGCGLAMDDFGAGYSSLDRLCEFPFSQIKLDRTFVQKMKTQPRSCAVISSVVALAQALGISLVVEGVESDEQRVRLIELGCSIAQGYLFARPMPEQHFLDYCSGS</sequence>
<protein>
    <recommendedName>
        <fullName evidence="13">Cyclic di-GMP phosphodiesterase RocR</fullName>
        <shortName evidence="12">c-di-GMP PDE</shortName>
        <ecNumber evidence="5 6">3.1.4.52</ecNumber>
    </recommendedName>
    <alternativeName>
        <fullName evidence="13">Response regulator RocR</fullName>
    </alternativeName>
</protein>
<feature type="chain" id="PRO_0000458263" description="Cyclic di-GMP phosphodiesterase RocR">
    <location>
        <begin position="1"/>
        <end position="392"/>
    </location>
</feature>
<feature type="domain" description="Response regulatory" evidence="2">
    <location>
        <begin position="5"/>
        <end position="126"/>
    </location>
</feature>
<feature type="domain" description="EAL" evidence="1">
    <location>
        <begin position="140"/>
        <end position="392"/>
    </location>
</feature>
<feature type="active site" description="Proton acceptor" evidence="14">
    <location>
        <position position="352"/>
    </location>
</feature>
<feature type="binding site" evidence="8 16">
    <location>
        <position position="175"/>
    </location>
    <ligand>
        <name>Mg(2+)</name>
        <dbReference type="ChEBI" id="CHEBI:18420"/>
    </ligand>
</feature>
<feature type="binding site" evidence="8 16">
    <location>
        <position position="233"/>
    </location>
    <ligand>
        <name>Mg(2+)</name>
        <dbReference type="ChEBI" id="CHEBI:18420"/>
    </ligand>
</feature>
<feature type="binding site" evidence="8 16">
    <location>
        <position position="265"/>
    </location>
    <ligand>
        <name>Mg(2+)</name>
        <dbReference type="ChEBI" id="CHEBI:18420"/>
    </ligand>
</feature>
<feature type="binding site" evidence="8 16">
    <location>
        <position position="295"/>
    </location>
    <ligand>
        <name>Mg(2+)</name>
        <dbReference type="ChEBI" id="CHEBI:18420"/>
    </ligand>
</feature>
<feature type="modified residue" description="4-aspartylphosphate" evidence="2">
    <location>
        <position position="56"/>
    </location>
</feature>
<feature type="mutagenesis site" description="5.2-fold decrease in kcat." evidence="6">
    <original>D</original>
    <variation>N</variation>
    <location>
        <position position="56"/>
    </location>
</feature>
<feature type="mutagenesis site" description="5.1-fold decrease in kcat." evidence="5">
    <original>Q</original>
    <variation>A</variation>
    <location>
        <position position="161"/>
    </location>
</feature>
<feature type="mutagenesis site" description="Loss of activity. Activity can be partially restored at elevated Mg(2+) concentrations (up to 500 mM)." evidence="5">
    <original>E</original>
    <variation>A</variation>
    <location>
        <position position="175"/>
    </location>
</feature>
<feature type="mutagenesis site" description="29.1-fold decrease in kcat." evidence="5">
    <original>R</original>
    <variation>A</variation>
    <location>
        <position position="179"/>
    </location>
</feature>
<feature type="mutagenesis site" description="Loss of activity. Activity can be fully restored at elevated Mg(2+) concentrations (up to 500 mM)." evidence="5">
    <original>N</original>
    <variation>A</variation>
    <location>
        <position position="233"/>
    </location>
</feature>
<feature type="mutagenesis site" description="Loss of activity. Activity can be partially restored at elevated Mg(2+) concentrations (up to 500 mM)." evidence="5">
    <original>E</original>
    <variation>A</variation>
    <location>
        <position position="265"/>
    </location>
</feature>
<feature type="mutagenesis site" description="13.4-fold decrease in kcat." evidence="5">
    <original>T</original>
    <variation>A</variation>
    <location>
        <position position="267"/>
    </location>
</feature>
<feature type="mutagenesis site" description="Loss of activity. Activity can be partially restored at elevated Mg(2+) concentrations (up to 500 mM)." evidence="5 6">
    <original>E</original>
    <variation>A</variation>
    <location>
        <position position="268"/>
    </location>
</feature>
<feature type="mutagenesis site" description="446-fold decrease in kcat." evidence="5 6">
    <original>E</original>
    <variation>Q</variation>
    <location>
        <position position="268"/>
    </location>
</feature>
<feature type="mutagenesis site" description="Thermostable. Shows lower enzymatic activity." evidence="8">
    <original>R</original>
    <variation>W</variation>
    <location>
        <position position="286"/>
    </location>
</feature>
<feature type="mutagenesis site" description="Loss of activity. Activity can be partially restored at elevated Mg(2+) concentrations (up to 500 mM)." evidence="5">
    <original>D</original>
    <variation>A</variation>
    <location>
        <position position="295"/>
    </location>
</feature>
<feature type="mutagenesis site" description="33.5-fold decrease in kcat." evidence="5 6">
    <original>D</original>
    <variation>A</variation>
    <location>
        <position position="296"/>
    </location>
</feature>
<feature type="mutagenesis site" description="33.5-fold decrease in kcat." evidence="6">
    <original>F</original>
    <variation>A</variation>
    <location>
        <position position="297"/>
    </location>
</feature>
<feature type="mutagenesis site" description="4.8-fold decrease in kcat." evidence="6">
    <original>S</original>
    <variation>A</variation>
    <location>
        <position position="302"/>
    </location>
</feature>
<feature type="mutagenesis site" description="Loss of activity. Activity can be partially restored at elevated Mg(2+) concentrations (up to 500 mM)." evidence="5">
    <original>K</original>
    <variation>A</variation>
    <location>
        <position position="316"/>
    </location>
</feature>
<feature type="mutagenesis site" description="8.4-fold decrease in kcat." evidence="5">
    <original>D</original>
    <variation>A</variation>
    <location>
        <position position="318"/>
    </location>
</feature>
<feature type="mutagenesis site" description="Loss of activity." evidence="5">
    <original>E</original>
    <variation>A</variation>
    <variation>C</variation>
    <location>
        <position position="352"/>
    </location>
</feature>
<feature type="mutagenesis site" description="30000-fold decrease in kcat." evidence="5">
    <original>E</original>
    <variation>D</variation>
    <location>
        <position position="352"/>
    </location>
</feature>
<feature type="mutagenesis site" description="61000-fold decrease in kcat." evidence="5">
    <original>E</original>
    <variation>Q</variation>
    <location>
        <position position="352"/>
    </location>
</feature>
<feature type="mutagenesis site" description="1.3-fold decrease in kcat." evidence="5">
    <original>E</original>
    <variation>A</variation>
    <location>
        <position position="355"/>
    </location>
</feature>
<feature type="mutagenesis site" description="8.4-fold decrease in kcat." evidence="5">
    <original>Q</original>
    <variation>A</variation>
    <location>
        <position position="372"/>
    </location>
</feature>
<feature type="strand" evidence="17">
    <location>
        <begin position="4"/>
        <end position="9"/>
    </location>
</feature>
<feature type="helix" evidence="17">
    <location>
        <begin position="13"/>
        <end position="26"/>
    </location>
</feature>
<feature type="strand" evidence="17">
    <location>
        <begin position="28"/>
        <end position="36"/>
    </location>
</feature>
<feature type="helix" evidence="17">
    <location>
        <begin position="37"/>
        <end position="47"/>
    </location>
</feature>
<feature type="strand" evidence="17">
    <location>
        <begin position="50"/>
        <end position="55"/>
    </location>
</feature>
<feature type="strand" evidence="17">
    <location>
        <begin position="60"/>
        <end position="62"/>
    </location>
</feature>
<feature type="helix" evidence="17">
    <location>
        <begin position="64"/>
        <end position="74"/>
    </location>
</feature>
<feature type="strand" evidence="17">
    <location>
        <begin position="77"/>
        <end position="83"/>
    </location>
</feature>
<feature type="helix" evidence="17">
    <location>
        <begin position="88"/>
        <end position="90"/>
    </location>
</feature>
<feature type="helix" evidence="17">
    <location>
        <begin position="91"/>
        <end position="99"/>
    </location>
</feature>
<feature type="turn" evidence="17">
    <location>
        <begin position="100"/>
        <end position="102"/>
    </location>
</feature>
<feature type="strand" evidence="17">
    <location>
        <begin position="104"/>
        <end position="108"/>
    </location>
</feature>
<feature type="helix" evidence="17">
    <location>
        <begin position="115"/>
        <end position="128"/>
    </location>
</feature>
<feature type="helix" evidence="17">
    <location>
        <begin position="144"/>
        <end position="152"/>
    </location>
</feature>
<feature type="strand" evidence="17">
    <location>
        <begin position="156"/>
        <end position="168"/>
    </location>
</feature>
<feature type="strand" evidence="17">
    <location>
        <begin position="171"/>
        <end position="182"/>
    </location>
</feature>
<feature type="turn" evidence="17">
    <location>
        <begin position="183"/>
        <end position="185"/>
    </location>
</feature>
<feature type="strand" evidence="17">
    <location>
        <begin position="186"/>
        <end position="188"/>
    </location>
</feature>
<feature type="helix" evidence="17">
    <location>
        <begin position="190"/>
        <end position="192"/>
    </location>
</feature>
<feature type="helix" evidence="17">
    <location>
        <begin position="194"/>
        <end position="199"/>
    </location>
</feature>
<feature type="helix" evidence="17">
    <location>
        <begin position="203"/>
        <end position="223"/>
    </location>
</feature>
<feature type="strand" evidence="17">
    <location>
        <begin position="229"/>
        <end position="233"/>
    </location>
</feature>
<feature type="helix" evidence="17">
    <location>
        <begin position="236"/>
        <end position="239"/>
    </location>
</feature>
<feature type="helix" evidence="17">
    <location>
        <begin position="244"/>
        <end position="254"/>
    </location>
</feature>
<feature type="helix" evidence="17">
    <location>
        <begin position="259"/>
        <end position="261"/>
    </location>
</feature>
<feature type="strand" evidence="17">
    <location>
        <begin position="262"/>
        <end position="267"/>
    </location>
</feature>
<feature type="helix" evidence="17">
    <location>
        <begin position="268"/>
        <end position="272"/>
    </location>
</feature>
<feature type="helix" evidence="17">
    <location>
        <begin position="276"/>
        <end position="288"/>
    </location>
</feature>
<feature type="strand" evidence="17">
    <location>
        <begin position="291"/>
        <end position="297"/>
    </location>
</feature>
<feature type="helix" evidence="17">
    <location>
        <begin position="302"/>
        <end position="305"/>
    </location>
</feature>
<feature type="strand" evidence="17">
    <location>
        <begin position="306"/>
        <end position="309"/>
    </location>
</feature>
<feature type="strand" evidence="17">
    <location>
        <begin position="313"/>
        <end position="317"/>
    </location>
</feature>
<feature type="helix" evidence="17">
    <location>
        <begin position="320"/>
        <end position="327"/>
    </location>
</feature>
<feature type="helix" evidence="17">
    <location>
        <begin position="331"/>
        <end position="345"/>
    </location>
</feature>
<feature type="strand" evidence="17">
    <location>
        <begin position="348"/>
        <end position="351"/>
    </location>
</feature>
<feature type="helix" evidence="17">
    <location>
        <begin position="357"/>
        <end position="366"/>
    </location>
</feature>
<feature type="turn" evidence="17">
    <location>
        <begin position="374"/>
        <end position="376"/>
    </location>
</feature>
<feature type="helix" evidence="17">
    <location>
        <begin position="382"/>
        <end position="391"/>
    </location>
</feature>
<keyword id="KW-0002">3D-structure</keyword>
<keyword id="KW-0973">c-di-GMP</keyword>
<keyword id="KW-0378">Hydrolase</keyword>
<keyword id="KW-0460">Magnesium</keyword>
<keyword id="KW-0479">Metal-binding</keyword>
<keyword id="KW-0597">Phosphoprotein</keyword>
<keyword id="KW-1185">Reference proteome</keyword>
<keyword id="KW-0716">Sensory transduction</keyword>
<name>ROCR_PSEAE</name>
<reference key="1">
    <citation type="journal article" date="2000" name="Nature">
        <title>Complete genome sequence of Pseudomonas aeruginosa PAO1, an opportunistic pathogen.</title>
        <authorList>
            <person name="Stover C.K."/>
            <person name="Pham X.-Q.T."/>
            <person name="Erwin A.L."/>
            <person name="Mizoguchi S.D."/>
            <person name="Warrener P."/>
            <person name="Hickey M.J."/>
            <person name="Brinkman F.S.L."/>
            <person name="Hufnagle W.O."/>
            <person name="Kowalik D.J."/>
            <person name="Lagrou M."/>
            <person name="Garber R.L."/>
            <person name="Goltry L."/>
            <person name="Tolentino E."/>
            <person name="Westbrock-Wadman S."/>
            <person name="Yuan Y."/>
            <person name="Brody L.L."/>
            <person name="Coulter S.N."/>
            <person name="Folger K.R."/>
            <person name="Kas A."/>
            <person name="Larbig K."/>
            <person name="Lim R.M."/>
            <person name="Smith K.A."/>
            <person name="Spencer D.H."/>
            <person name="Wong G.K.-S."/>
            <person name="Wu Z."/>
            <person name="Paulsen I.T."/>
            <person name="Reizer J."/>
            <person name="Saier M.H. Jr."/>
            <person name="Hancock R.E.W."/>
            <person name="Lory S."/>
            <person name="Olson M.V."/>
        </authorList>
    </citation>
    <scope>NUCLEOTIDE SEQUENCE [LARGE SCALE GENOMIC DNA]</scope>
    <source>
        <strain>ATCC 15692 / DSM 22644 / CIP 104116 / JCM 14847 / LMG 12228 / 1C / PRS 101 / PAO1</strain>
    </source>
</reference>
<reference key="2">
    <citation type="journal article" date="2005" name="J. Bacteriol.">
        <title>A three-component regulatory system regulates biofilm maturation and type III secretion in Pseudomonas aeruginosa.</title>
        <authorList>
            <person name="Kuchma S.L."/>
            <person name="Connolly J.P."/>
            <person name="O'Toole G.A."/>
        </authorList>
    </citation>
    <scope>FUNCTION</scope>
    <scope>DISRUPTION PHENOTYPE</scope>
    <source>
        <strain>PA14</strain>
    </source>
</reference>
<reference key="3">
    <citation type="journal article" date="2005" name="Mol. Microbiol.">
        <title>A novel two-component system controls the expression of Pseudomonas aeruginosa fimbrial cup genes.</title>
        <authorList>
            <person name="Kulasekara H.D."/>
            <person name="Ventre I."/>
            <person name="Kulasekara B.R."/>
            <person name="Lazdunski A."/>
            <person name="Filloux A."/>
            <person name="Lory S."/>
        </authorList>
    </citation>
    <scope>FUNCTION</scope>
    <scope>INTERACTION WITH ROCS1</scope>
    <scope>DOMAIN</scope>
    <source>
        <strain>PAK</strain>
    </source>
</reference>
<reference key="4">
    <citation type="journal article" date="2008" name="J. Bacteriol.">
        <title>Catalytic mechanism of cyclic di-GMP-specific phosphodiesterase: a study of the EAL domain-containing RocR from Pseudomonas aeruginosa.</title>
        <authorList>
            <person name="Rao F."/>
            <person name="Yang Y."/>
            <person name="Qi Y."/>
            <person name="Liang Z.X."/>
        </authorList>
    </citation>
    <scope>FUNCTION</scope>
    <scope>CATALYTIC ACTIVITY</scope>
    <scope>COFACTOR</scope>
    <scope>ACTIVITY REGULATION</scope>
    <scope>BIOPHYSICOCHEMICAL PROPERTIES</scope>
    <scope>ACTIVE SITE</scope>
    <scope>MUTAGENESIS OF GLN-161; GLU-175; ARG-179; ASN-233; GLU-265; THR-267; GLU-268; ASP-295; ASP-296; LYS-316; ASP-318; GLU-352; GLU-355 AND GLN-372</scope>
    <source>
        <strain>ATCC 15692 / DSM 22644 / CIP 104116 / JCM 14847 / LMG 12228 / 1C / PRS 101 / PAO1</strain>
    </source>
</reference>
<reference key="5">
    <citation type="journal article" date="2009" name="J. Bacteriol.">
        <title>The functional role of a conserved loop in EAL domain-based cyclic di-GMP-specific phosphodiesterase.</title>
        <authorList>
            <person name="Rao F."/>
            <person name="Qi Y."/>
            <person name="Chong H.S."/>
            <person name="Kotaka M."/>
            <person name="Li B."/>
            <person name="Li J."/>
            <person name="Lescar J."/>
            <person name="Tang K."/>
            <person name="Liang Z.X."/>
        </authorList>
    </citation>
    <scope>FUNCTION</scope>
    <scope>CATALYTIC ACTIVITY</scope>
    <scope>DOMAIN</scope>
    <scope>MUTAGENESIS OF ASP-56; GLU-268; ASP-296; PHE-297 AND SER-302</scope>
</reference>
<reference key="6">
    <citation type="journal article" date="2009" name="Acta Crystallogr. F">
        <title>Expression, purification and preliminary crystallographic analysis of Pseudomonas aeruginosa RocR protein.</title>
        <authorList>
            <person name="Kotaka M."/>
            <person name="Dutta S."/>
            <person name="Lee H.C."/>
            <person name="Lim M.J."/>
            <person name="Wong Y."/>
            <person name="Rao F."/>
            <person name="Mitchell E.P."/>
            <person name="Liang Z.X."/>
            <person name="Lescar J."/>
        </authorList>
    </citation>
    <scope>SUBUNIT</scope>
    <scope>CRYSTALLIZATION</scope>
    <source>
        <strain>ATCC 15692 / DSM 22644 / CIP 104116 / JCM 14847 / LMG 12228 / 1C / PRS 101 / PAO1</strain>
    </source>
</reference>
<reference key="7">
    <citation type="journal article" date="2016" name="Chem. Sci.">
        <title>Inhibition of P. aeruginosa c-di-GMP phosphodiesterase RocR and swarming motility by a benzoisothiazolinone derivative.</title>
        <authorList>
            <person name="Zheng Y."/>
            <person name="Tsuji G."/>
            <person name="Opoku-Temeng C."/>
            <person name="Sintim H.O."/>
        </authorList>
    </citation>
    <scope>ACTIVITY REGULATION</scope>
    <source>
        <strain>ATCC 15692 / DSM 22644 / CIP 104116 / JCM 14847 / LMG 12228 / 1C / PRS 101 / PAO1</strain>
    </source>
</reference>
<reference evidence="16" key="8">
    <citation type="journal article" date="2012" name="J. Bacteriol.">
        <title>Structural insights into the regulatory mechanism of the response regulator RocR from Pseudomonas aeruginosa in cyclic Di-GMP signaling.</title>
        <authorList>
            <person name="Chen M.W."/>
            <person name="Kotaka M."/>
            <person name="Vonrhein C."/>
            <person name="Bricogne G."/>
            <person name="Rao F."/>
            <person name="Chuah M.L."/>
            <person name="Svergun D."/>
            <person name="Schneider G."/>
            <person name="Liang Z.X."/>
            <person name="Lescar J."/>
        </authorList>
    </citation>
    <scope>X-RAY CRYSTALLOGRAPHY (2.50 ANGSTROMS) OF MUTANT TRP-286 IN COMPLEX WITH MAGNESIUM</scope>
    <scope>COFACTOR</scope>
    <scope>ACTIVITY REGULATION</scope>
    <scope>SUBUNIT</scope>
    <scope>DOMAIN</scope>
    <scope>MUTAGENESIS OF ARG-286</scope>
</reference>
<organism>
    <name type="scientific">Pseudomonas aeruginosa (strain ATCC 15692 / DSM 22644 / CIP 104116 / JCM 14847 / LMG 12228 / 1C / PRS 101 / PAO1)</name>
    <dbReference type="NCBI Taxonomy" id="208964"/>
    <lineage>
        <taxon>Bacteria</taxon>
        <taxon>Pseudomonadati</taxon>
        <taxon>Pseudomonadota</taxon>
        <taxon>Gammaproteobacteria</taxon>
        <taxon>Pseudomonadales</taxon>
        <taxon>Pseudomonadaceae</taxon>
        <taxon>Pseudomonas</taxon>
    </lineage>
</organism>
<dbReference type="EC" id="3.1.4.52" evidence="5 6"/>
<dbReference type="EMBL" id="AE004091">
    <property type="protein sequence ID" value="AAG07334.1"/>
    <property type="molecule type" value="Genomic_DNA"/>
</dbReference>
<dbReference type="PIR" id="C83151">
    <property type="entry name" value="C83151"/>
</dbReference>
<dbReference type="RefSeq" id="NP_252636.1">
    <property type="nucleotide sequence ID" value="NC_002516.2"/>
</dbReference>
<dbReference type="RefSeq" id="WP_003106013.1">
    <property type="nucleotide sequence ID" value="NZ_QZGE01000001.1"/>
</dbReference>
<dbReference type="PDB" id="3SY8">
    <property type="method" value="X-ray"/>
    <property type="resolution" value="2.50 A"/>
    <property type="chains" value="A/B/C/D=1-392"/>
</dbReference>
<dbReference type="PDBsum" id="3SY8"/>
<dbReference type="SASBDB" id="Q9HX69"/>
<dbReference type="SMR" id="Q9HX69"/>
<dbReference type="FunCoup" id="Q9HX69">
    <property type="interactions" value="7"/>
</dbReference>
<dbReference type="STRING" id="208964.PA3947"/>
<dbReference type="BindingDB" id="Q9HX69"/>
<dbReference type="ChEMBL" id="CHEMBL2396510"/>
<dbReference type="PaxDb" id="208964-PA3947"/>
<dbReference type="DNASU" id="878871"/>
<dbReference type="GeneID" id="878871"/>
<dbReference type="KEGG" id="pae:PA3947"/>
<dbReference type="PATRIC" id="fig|208964.12.peg.4136"/>
<dbReference type="PseudoCAP" id="PA3947"/>
<dbReference type="HOGENOM" id="CLU_000445_70_2_6"/>
<dbReference type="InParanoid" id="Q9HX69"/>
<dbReference type="OrthoDB" id="9812358at2"/>
<dbReference type="PhylomeDB" id="Q9HX69"/>
<dbReference type="BioCyc" id="PAER208964:G1FZ6-4020-MONOMER"/>
<dbReference type="BRENDA" id="3.1.4.52">
    <property type="organism ID" value="5087"/>
</dbReference>
<dbReference type="EvolutionaryTrace" id="Q9HX69"/>
<dbReference type="Proteomes" id="UP000002438">
    <property type="component" value="Chromosome"/>
</dbReference>
<dbReference type="GO" id="GO:0005886">
    <property type="term" value="C:plasma membrane"/>
    <property type="evidence" value="ECO:0000318"/>
    <property type="project" value="GO_Central"/>
</dbReference>
<dbReference type="GO" id="GO:0071111">
    <property type="term" value="F:cyclic-guanylate-specific phosphodiesterase activity"/>
    <property type="evidence" value="ECO:0000314"/>
    <property type="project" value="PseudoCAP"/>
</dbReference>
<dbReference type="GO" id="GO:0046872">
    <property type="term" value="F:metal ion binding"/>
    <property type="evidence" value="ECO:0007669"/>
    <property type="project" value="UniProtKB-KW"/>
</dbReference>
<dbReference type="GO" id="GO:0045892">
    <property type="term" value="P:negative regulation of DNA-templated transcription"/>
    <property type="evidence" value="ECO:0000315"/>
    <property type="project" value="PseudoCAP"/>
</dbReference>
<dbReference type="GO" id="GO:0000160">
    <property type="term" value="P:phosphorelay signal transduction system"/>
    <property type="evidence" value="ECO:0007669"/>
    <property type="project" value="InterPro"/>
</dbReference>
<dbReference type="CDD" id="cd01948">
    <property type="entry name" value="EAL"/>
    <property type="match status" value="1"/>
</dbReference>
<dbReference type="CDD" id="cd17530">
    <property type="entry name" value="REC_RocR"/>
    <property type="match status" value="1"/>
</dbReference>
<dbReference type="Gene3D" id="3.40.50.2300">
    <property type="match status" value="1"/>
</dbReference>
<dbReference type="Gene3D" id="3.20.20.450">
    <property type="entry name" value="EAL domain"/>
    <property type="match status" value="1"/>
</dbReference>
<dbReference type="InterPro" id="IPR011006">
    <property type="entry name" value="CheY-like_superfamily"/>
</dbReference>
<dbReference type="InterPro" id="IPR050706">
    <property type="entry name" value="Cyclic-di-GMP_PDE-like"/>
</dbReference>
<dbReference type="InterPro" id="IPR001633">
    <property type="entry name" value="EAL_dom"/>
</dbReference>
<dbReference type="InterPro" id="IPR035919">
    <property type="entry name" value="EAL_sf"/>
</dbReference>
<dbReference type="InterPro" id="IPR001789">
    <property type="entry name" value="Sig_transdc_resp-reg_receiver"/>
</dbReference>
<dbReference type="PANTHER" id="PTHR33121">
    <property type="entry name" value="CYCLIC DI-GMP PHOSPHODIESTERASE PDEF"/>
    <property type="match status" value="1"/>
</dbReference>
<dbReference type="PANTHER" id="PTHR33121:SF70">
    <property type="entry name" value="SIGNALING PROTEIN YKOW"/>
    <property type="match status" value="1"/>
</dbReference>
<dbReference type="Pfam" id="PF00563">
    <property type="entry name" value="EAL"/>
    <property type="match status" value="1"/>
</dbReference>
<dbReference type="Pfam" id="PF00072">
    <property type="entry name" value="Response_reg"/>
    <property type="match status" value="1"/>
</dbReference>
<dbReference type="SMART" id="SM00052">
    <property type="entry name" value="EAL"/>
    <property type="match status" value="1"/>
</dbReference>
<dbReference type="SMART" id="SM00448">
    <property type="entry name" value="REC"/>
    <property type="match status" value="1"/>
</dbReference>
<dbReference type="SUPFAM" id="SSF52172">
    <property type="entry name" value="CheY-like"/>
    <property type="match status" value="1"/>
</dbReference>
<dbReference type="SUPFAM" id="SSF141868">
    <property type="entry name" value="EAL domain-like"/>
    <property type="match status" value="1"/>
</dbReference>
<dbReference type="PROSITE" id="PS50883">
    <property type="entry name" value="EAL"/>
    <property type="match status" value="1"/>
</dbReference>
<dbReference type="PROSITE" id="PS50110">
    <property type="entry name" value="RESPONSE_REGULATORY"/>
    <property type="match status" value="1"/>
</dbReference>
<accession>Q9HX69</accession>
<evidence type="ECO:0000255" key="1">
    <source>
        <dbReference type="PROSITE-ProRule" id="PRU00074"/>
    </source>
</evidence>
<evidence type="ECO:0000255" key="2">
    <source>
        <dbReference type="PROSITE-ProRule" id="PRU00169"/>
    </source>
</evidence>
<evidence type="ECO:0000269" key="3">
    <source>
    </source>
</evidence>
<evidence type="ECO:0000269" key="4">
    <source>
    </source>
</evidence>
<evidence type="ECO:0000269" key="5">
    <source>
    </source>
</evidence>
<evidence type="ECO:0000269" key="6">
    <source>
    </source>
</evidence>
<evidence type="ECO:0000269" key="7">
    <source>
    </source>
</evidence>
<evidence type="ECO:0000269" key="8">
    <source>
    </source>
</evidence>
<evidence type="ECO:0000269" key="9">
    <source>
    </source>
</evidence>
<evidence type="ECO:0000303" key="10">
    <source>
    </source>
</evidence>
<evidence type="ECO:0000303" key="11">
    <source>
    </source>
</evidence>
<evidence type="ECO:0000303" key="12">
    <source>
    </source>
</evidence>
<evidence type="ECO:0000305" key="13"/>
<evidence type="ECO:0000305" key="14">
    <source>
    </source>
</evidence>
<evidence type="ECO:0000312" key="15">
    <source>
        <dbReference type="EMBL" id="AAG07334.1"/>
    </source>
</evidence>
<evidence type="ECO:0007744" key="16">
    <source>
        <dbReference type="PDB" id="3SY8"/>
    </source>
</evidence>
<evidence type="ECO:0007829" key="17">
    <source>
        <dbReference type="PDB" id="3SY8"/>
    </source>
</evidence>
<gene>
    <name evidence="10" type="primary">rocR</name>
    <name evidence="11" type="synonym">sadR</name>
    <name evidence="15" type="ordered locus">PA3947</name>
</gene>
<comment type="function">
    <text evidence="3 4 5 6">Phosphodiesterase (PDE) that catalyzes the hydrolysis of cyclic diguanylate (c-di-GMP) to 5'-pGpG (PubMed:18344366, PubMed:19376848). Cannot use cyclic AMP or cyclic GMP (PubMed:18344366). Part of the RocSAR two-component regulatory signaling system (also known as the SadARS system), which regulates biofilm maturation, type III secretion and expression of the cup fimbrial-gene cluster (PubMed:15659157, PubMed:15687209). Negatively regulates the expression of cup genes by antagonizing the activity of RocA1 (PubMed:15659157).</text>
</comment>
<comment type="catalytic activity">
    <reaction evidence="5 6">
        <text>3',3'-c-di-GMP + H2O = 5'-phosphoguanylyl(3'-&gt;5')guanosine + H(+)</text>
        <dbReference type="Rhea" id="RHEA:24902"/>
        <dbReference type="ChEBI" id="CHEBI:15377"/>
        <dbReference type="ChEBI" id="CHEBI:15378"/>
        <dbReference type="ChEBI" id="CHEBI:58754"/>
        <dbReference type="ChEBI" id="CHEBI:58805"/>
        <dbReference type="EC" id="3.1.4.52"/>
    </reaction>
    <physiologicalReaction direction="left-to-right" evidence="5 6">
        <dbReference type="Rhea" id="RHEA:24903"/>
    </physiologicalReaction>
</comment>
<comment type="cofactor">
    <cofactor evidence="5 8">
        <name>Mg(2+)</name>
        <dbReference type="ChEBI" id="CHEBI:18420"/>
    </cofactor>
    <text evidence="5 8">Binds 1 Mg(2+) ion per subunit (PubMed:22753070). Can also use Mn(2+) (PubMed:18344366).</text>
</comment>
<comment type="activity regulation">
    <text evidence="5 8 9">Phosphorylation of Asp-56 probably induces local conformational changes in the response regulatory domain (PubMed:22753070). These structural changes are transmitted to the adjacent EAL domain, then the signal is further transmitted down to the active site (PubMed:22753070). The phosphodiesterase activity is inhibited by Ca(2+) and Zn(2+) (PubMed:18344366). Phosphodiesterase activity is inhibited by a benzoisothiazolinone derivative that specifically inhibited RocR, but not some other phosphodiesterases (PubMed:30034764).</text>
</comment>
<comment type="biophysicochemical properties">
    <kinetics>
        <KM evidence="5">3.2 uM for c-di-GMP</KM>
        <text evidence="5">kcat is 0.67 sec(-1).</text>
    </kinetics>
    <phDependence>
        <text evidence="5">Optimum pH is 8.0-8.5.</text>
    </phDependence>
</comment>
<comment type="subunit">
    <text evidence="3 7 8">Homotetramer (PubMed:19851016, PubMed:22753070). Exhibits a highly unusual tetrameric structure arranged around a single dyad, with the four subunits adopting two distinctly different conformations, with only two active sites accessible for substrate binding (PubMed:22753070). Interacts with RocS1 (PubMed:15659157).</text>
</comment>
<comment type="domain">
    <text evidence="3 6 8">Contains an N-terminal phosphoreceiver (REC) domain and a C-terminal EAL domain that possesses c-di-GMP specific phosphodiesterase activity (PubMed:19376848, PubMed:22753070). The EAL domain contains a functional active site loop (loop 6), which plays crucial roles in stabilizing the overall protein structure and participating in catalysis, and also controls c-di-GMP and Mg(2+) ion binding (PubMed:19376848). The response regulatory domain is involved in interaction with the Hpt domain of RocS1 (PubMed:15659157).</text>
</comment>
<comment type="disruption phenotype">
    <text evidence="4">Disruption of the gene results in biofilms with an altered mature structure but does not confer defects in growth or early biofilm formation, swimming or twitching motility.</text>
</comment>
<proteinExistence type="evidence at protein level"/>